<gene>
    <name evidence="1" type="primary">slmA</name>
    <name type="ordered locus">KPK_0113</name>
</gene>
<evidence type="ECO:0000255" key="1">
    <source>
        <dbReference type="HAMAP-Rule" id="MF_01839"/>
    </source>
</evidence>
<evidence type="ECO:0007829" key="2">
    <source>
        <dbReference type="PDB" id="4GCK"/>
    </source>
</evidence>
<name>SLMA_KLEP3</name>
<keyword id="KW-0002">3D-structure</keyword>
<keyword id="KW-0131">Cell cycle</keyword>
<keyword id="KW-0132">Cell division</keyword>
<keyword id="KW-0175">Coiled coil</keyword>
<keyword id="KW-0963">Cytoplasm</keyword>
<keyword id="KW-0238">DNA-binding</keyword>
<organism>
    <name type="scientific">Klebsiella pneumoniae (strain 342)</name>
    <dbReference type="NCBI Taxonomy" id="507522"/>
    <lineage>
        <taxon>Bacteria</taxon>
        <taxon>Pseudomonadati</taxon>
        <taxon>Pseudomonadota</taxon>
        <taxon>Gammaproteobacteria</taxon>
        <taxon>Enterobacterales</taxon>
        <taxon>Enterobacteriaceae</taxon>
        <taxon>Klebsiella/Raoultella group</taxon>
        <taxon>Klebsiella</taxon>
        <taxon>Klebsiella pneumoniae complex</taxon>
    </lineage>
</organism>
<reference key="1">
    <citation type="journal article" date="2008" name="PLoS Genet.">
        <title>Complete genome sequence of the N2-fixing broad host range endophyte Klebsiella pneumoniae 342 and virulence predictions verified in mice.</title>
        <authorList>
            <person name="Fouts D.E."/>
            <person name="Tyler H.L."/>
            <person name="DeBoy R.T."/>
            <person name="Daugherty S."/>
            <person name="Ren Q."/>
            <person name="Badger J.H."/>
            <person name="Durkin A.S."/>
            <person name="Huot H."/>
            <person name="Shrivastava S."/>
            <person name="Kothari S."/>
            <person name="Dodson R.J."/>
            <person name="Mohamoud Y."/>
            <person name="Khouri H."/>
            <person name="Roesch L.F.W."/>
            <person name="Krogfelt K.A."/>
            <person name="Struve C."/>
            <person name="Triplett E.W."/>
            <person name="Methe B.A."/>
        </authorList>
    </citation>
    <scope>NUCLEOTIDE SEQUENCE [LARGE SCALE GENOMIC DNA]</scope>
    <source>
        <strain>342</strain>
    </source>
</reference>
<dbReference type="EMBL" id="CP000964">
    <property type="protein sequence ID" value="ACI06851.1"/>
    <property type="molecule type" value="Genomic_DNA"/>
</dbReference>
<dbReference type="PDB" id="4GCK">
    <property type="method" value="X-ray"/>
    <property type="resolution" value="2.05 A"/>
    <property type="chains" value="A/B/C/D=1-198"/>
</dbReference>
<dbReference type="PDB" id="4GFL">
    <property type="method" value="X-ray"/>
    <property type="resolution" value="2.30 A"/>
    <property type="chains" value="A/B=1-198"/>
</dbReference>
<dbReference type="PDBsum" id="4GCK"/>
<dbReference type="PDBsum" id="4GFL"/>
<dbReference type="SMR" id="B5XTG2"/>
<dbReference type="KEGG" id="kpe:KPK_0113"/>
<dbReference type="HOGENOM" id="CLU_069356_5_0_6"/>
<dbReference type="EvolutionaryTrace" id="B5XTG2"/>
<dbReference type="Proteomes" id="UP000001734">
    <property type="component" value="Chromosome"/>
</dbReference>
<dbReference type="GO" id="GO:0043590">
    <property type="term" value="C:bacterial nucleoid"/>
    <property type="evidence" value="ECO:0007669"/>
    <property type="project" value="UniProtKB-UniRule"/>
</dbReference>
<dbReference type="GO" id="GO:0005737">
    <property type="term" value="C:cytoplasm"/>
    <property type="evidence" value="ECO:0007669"/>
    <property type="project" value="UniProtKB-UniRule"/>
</dbReference>
<dbReference type="GO" id="GO:0003700">
    <property type="term" value="F:DNA-binding transcription factor activity"/>
    <property type="evidence" value="ECO:0007669"/>
    <property type="project" value="TreeGrafter"/>
</dbReference>
<dbReference type="GO" id="GO:0000976">
    <property type="term" value="F:transcription cis-regulatory region binding"/>
    <property type="evidence" value="ECO:0007669"/>
    <property type="project" value="TreeGrafter"/>
</dbReference>
<dbReference type="GO" id="GO:0051301">
    <property type="term" value="P:cell division"/>
    <property type="evidence" value="ECO:0007669"/>
    <property type="project" value="UniProtKB-KW"/>
</dbReference>
<dbReference type="GO" id="GO:0010974">
    <property type="term" value="P:negative regulation of division septum assembly"/>
    <property type="evidence" value="ECO:0007669"/>
    <property type="project" value="InterPro"/>
</dbReference>
<dbReference type="FunFam" id="1.10.357.10:FF:000002">
    <property type="entry name" value="Nucleoid occlusion factor SlmA"/>
    <property type="match status" value="1"/>
</dbReference>
<dbReference type="Gene3D" id="1.10.357.10">
    <property type="entry name" value="Tetracycline Repressor, domain 2"/>
    <property type="match status" value="1"/>
</dbReference>
<dbReference type="HAMAP" id="MF_01839">
    <property type="entry name" value="NO_factor_SlmA"/>
    <property type="match status" value="1"/>
</dbReference>
<dbReference type="InterPro" id="IPR023772">
    <property type="entry name" value="DNA-bd_HTH_TetR-type_CS"/>
</dbReference>
<dbReference type="InterPro" id="IPR009057">
    <property type="entry name" value="Homeodomain-like_sf"/>
</dbReference>
<dbReference type="InterPro" id="IPR050109">
    <property type="entry name" value="HTH-type_TetR-like_transc_reg"/>
</dbReference>
<dbReference type="InterPro" id="IPR001647">
    <property type="entry name" value="HTH_TetR"/>
</dbReference>
<dbReference type="InterPro" id="IPR023769">
    <property type="entry name" value="NO_SlmA"/>
</dbReference>
<dbReference type="InterPro" id="IPR054580">
    <property type="entry name" value="SlmA-like_C"/>
</dbReference>
<dbReference type="InterPro" id="IPR036271">
    <property type="entry name" value="Tet_transcr_reg_TetR-rel_C_sf"/>
</dbReference>
<dbReference type="NCBIfam" id="NF007015">
    <property type="entry name" value="PRK09480.1"/>
    <property type="match status" value="1"/>
</dbReference>
<dbReference type="PANTHER" id="PTHR30055">
    <property type="entry name" value="HTH-TYPE TRANSCRIPTIONAL REGULATOR RUTR"/>
    <property type="match status" value="1"/>
</dbReference>
<dbReference type="PANTHER" id="PTHR30055:SF183">
    <property type="entry name" value="NUCLEOID OCCLUSION FACTOR SLMA"/>
    <property type="match status" value="1"/>
</dbReference>
<dbReference type="Pfam" id="PF22276">
    <property type="entry name" value="SlmA-like_C"/>
    <property type="match status" value="1"/>
</dbReference>
<dbReference type="Pfam" id="PF00440">
    <property type="entry name" value="TetR_N"/>
    <property type="match status" value="1"/>
</dbReference>
<dbReference type="SUPFAM" id="SSF46689">
    <property type="entry name" value="Homeodomain-like"/>
    <property type="match status" value="1"/>
</dbReference>
<dbReference type="SUPFAM" id="SSF48498">
    <property type="entry name" value="Tetracyclin repressor-like, C-terminal domain"/>
    <property type="match status" value="1"/>
</dbReference>
<dbReference type="PROSITE" id="PS01081">
    <property type="entry name" value="HTH_TETR_1"/>
    <property type="match status" value="1"/>
</dbReference>
<dbReference type="PROSITE" id="PS50977">
    <property type="entry name" value="HTH_TETR_2"/>
    <property type="match status" value="1"/>
</dbReference>
<accession>B5XTG2</accession>
<protein>
    <recommendedName>
        <fullName evidence="1">Nucleoid occlusion factor SlmA</fullName>
    </recommendedName>
</protein>
<feature type="chain" id="PRO_1000188391" description="Nucleoid occlusion factor SlmA">
    <location>
        <begin position="1"/>
        <end position="198"/>
    </location>
</feature>
<feature type="domain" description="HTH tetR-type" evidence="1">
    <location>
        <begin position="10"/>
        <end position="70"/>
    </location>
</feature>
<feature type="DNA-binding region" description="H-T-H motif" evidence="1">
    <location>
        <begin position="33"/>
        <end position="52"/>
    </location>
</feature>
<feature type="coiled-coil region" evidence="1">
    <location>
        <begin position="119"/>
        <end position="144"/>
    </location>
</feature>
<feature type="helix" evidence="2">
    <location>
        <begin position="10"/>
        <end position="24"/>
    </location>
</feature>
<feature type="helix" evidence="2">
    <location>
        <begin position="26"/>
        <end position="29"/>
    </location>
</feature>
<feature type="helix" evidence="2">
    <location>
        <begin position="34"/>
        <end position="41"/>
    </location>
</feature>
<feature type="helix" evidence="2">
    <location>
        <begin position="45"/>
        <end position="51"/>
    </location>
</feature>
<feature type="helix" evidence="2">
    <location>
        <begin position="55"/>
        <end position="80"/>
    </location>
</feature>
<feature type="helix" evidence="2">
    <location>
        <begin position="84"/>
        <end position="101"/>
    </location>
</feature>
<feature type="helix" evidence="2">
    <location>
        <begin position="103"/>
        <end position="109"/>
    </location>
</feature>
<feature type="helix" evidence="2">
    <location>
        <begin position="113"/>
        <end position="116"/>
    </location>
</feature>
<feature type="helix" evidence="2">
    <location>
        <begin position="119"/>
        <end position="147"/>
    </location>
</feature>
<feature type="helix" evidence="2">
    <location>
        <begin position="155"/>
        <end position="175"/>
    </location>
</feature>
<feature type="turn" evidence="2">
    <location>
        <begin position="176"/>
        <end position="178"/>
    </location>
</feature>
<feature type="turn" evidence="2">
    <location>
        <begin position="182"/>
        <end position="185"/>
    </location>
</feature>
<feature type="helix" evidence="2">
    <location>
        <begin position="186"/>
        <end position="194"/>
    </location>
</feature>
<proteinExistence type="evidence at protein level"/>
<sequence>MAEKQTAKRNRREEILQSLALMLESSDGSQRITTAKLAASVGVSEAALYRHFPSKTRMFDSLIEFIEDSLITRINLILKDEKDTTARLRLIVLLILGFGERNPGLTRILTGHALMFEQDRLQGRINQLFERIEVQLRQVMREKKMREGEGYTLDETLLASQLLAFCEGMLSRFVRSEFKYRPTDDFEARWPLVAAQLQ</sequence>
<comment type="function">
    <text evidence="1">Required for nucleoid occlusion (NO) phenomenon, which prevents Z-ring formation and cell division over the nucleoid. Acts as a DNA-associated cell division inhibitor that binds simultaneously chromosomal DNA and FtsZ, and disrupts the assembly of FtsZ polymers. SlmA-DNA-binding sequences (SBS) are dispersed on non-Ter regions of the chromosome, preventing FtsZ polymerization at these regions.</text>
</comment>
<comment type="subunit">
    <text evidence="1">Homodimer. Interacts with FtsZ.</text>
</comment>
<comment type="subcellular location">
    <subcellularLocation>
        <location evidence="1">Cytoplasm</location>
        <location evidence="1">Nucleoid</location>
    </subcellularLocation>
</comment>
<comment type="similarity">
    <text evidence="1">Belongs to the nucleoid occlusion factor SlmA family.</text>
</comment>